<dbReference type="EC" id="3.1.-.-" evidence="1"/>
<dbReference type="EMBL" id="AP009256">
    <property type="protein sequence ID" value="BAF39482.1"/>
    <property type="molecule type" value="Genomic_DNA"/>
</dbReference>
<dbReference type="SMR" id="A1A199"/>
<dbReference type="STRING" id="367928.BAD_0701"/>
<dbReference type="PaxDb" id="1680-BADO_0747"/>
<dbReference type="GeneID" id="4557091"/>
<dbReference type="KEGG" id="bad:BAD_0701"/>
<dbReference type="HOGENOM" id="CLU_098240_0_0_11"/>
<dbReference type="Proteomes" id="UP000008702">
    <property type="component" value="Chromosome"/>
</dbReference>
<dbReference type="GO" id="GO:0005829">
    <property type="term" value="C:cytosol"/>
    <property type="evidence" value="ECO:0007669"/>
    <property type="project" value="TreeGrafter"/>
</dbReference>
<dbReference type="GO" id="GO:0004518">
    <property type="term" value="F:nuclease activity"/>
    <property type="evidence" value="ECO:0007669"/>
    <property type="project" value="UniProtKB-KW"/>
</dbReference>
<dbReference type="GO" id="GO:0000967">
    <property type="term" value="P:rRNA 5'-end processing"/>
    <property type="evidence" value="ECO:0007669"/>
    <property type="project" value="UniProtKB-UniRule"/>
</dbReference>
<dbReference type="CDD" id="cd16964">
    <property type="entry name" value="YqgF"/>
    <property type="match status" value="1"/>
</dbReference>
<dbReference type="Gene3D" id="3.30.420.140">
    <property type="entry name" value="YqgF/RNase H-like domain"/>
    <property type="match status" value="1"/>
</dbReference>
<dbReference type="HAMAP" id="MF_00651">
    <property type="entry name" value="Nuclease_YqgF"/>
    <property type="match status" value="1"/>
</dbReference>
<dbReference type="InterPro" id="IPR012337">
    <property type="entry name" value="RNaseH-like_sf"/>
</dbReference>
<dbReference type="InterPro" id="IPR005227">
    <property type="entry name" value="YqgF"/>
</dbReference>
<dbReference type="InterPro" id="IPR006641">
    <property type="entry name" value="YqgF/RNaseH-like_dom"/>
</dbReference>
<dbReference type="InterPro" id="IPR037027">
    <property type="entry name" value="YqgF/RNaseH-like_dom_sf"/>
</dbReference>
<dbReference type="NCBIfam" id="TIGR00250">
    <property type="entry name" value="RNAse_H_YqgF"/>
    <property type="match status" value="1"/>
</dbReference>
<dbReference type="PANTHER" id="PTHR33317">
    <property type="entry name" value="POLYNUCLEOTIDYL TRANSFERASE, RIBONUCLEASE H-LIKE SUPERFAMILY PROTEIN"/>
    <property type="match status" value="1"/>
</dbReference>
<dbReference type="PANTHER" id="PTHR33317:SF4">
    <property type="entry name" value="POLYNUCLEOTIDYL TRANSFERASE, RIBONUCLEASE H-LIKE SUPERFAMILY PROTEIN"/>
    <property type="match status" value="1"/>
</dbReference>
<dbReference type="Pfam" id="PF03652">
    <property type="entry name" value="RuvX"/>
    <property type="match status" value="1"/>
</dbReference>
<dbReference type="SMART" id="SM00732">
    <property type="entry name" value="YqgFc"/>
    <property type="match status" value="1"/>
</dbReference>
<dbReference type="SUPFAM" id="SSF53098">
    <property type="entry name" value="Ribonuclease H-like"/>
    <property type="match status" value="1"/>
</dbReference>
<name>YQGF_BIFAA</name>
<reference key="1">
    <citation type="submission" date="2006-12" db="EMBL/GenBank/DDBJ databases">
        <title>Bifidobacterium adolescentis complete genome sequence.</title>
        <authorList>
            <person name="Suzuki T."/>
            <person name="Tsuda Y."/>
            <person name="Kanou N."/>
            <person name="Inoue T."/>
            <person name="Kumazaki K."/>
            <person name="Nagano S."/>
            <person name="Hirai S."/>
            <person name="Tanaka K."/>
            <person name="Watanabe K."/>
        </authorList>
    </citation>
    <scope>NUCLEOTIDE SEQUENCE [LARGE SCALE GENOMIC DNA]</scope>
    <source>
        <strain>ATCC 15703 / DSM 20083 / NCTC 11814 / E194a</strain>
    </source>
</reference>
<accession>A1A199</accession>
<gene>
    <name type="ordered locus">BAD_0701</name>
</gene>
<protein>
    <recommendedName>
        <fullName evidence="1">Putative pre-16S rRNA nuclease</fullName>
        <ecNumber evidence="1">3.1.-.-</ecNumber>
    </recommendedName>
</protein>
<sequence>MVWLGIDLGDARVGLALSDPELTLAHPIGNIQVYGDSFRALDEVIDVIGDESVDHVVIGLPLLLNGEEGKSAKKARRWSVNLEKRLHAAVEDESYSVTRVPTIELVDERLTTVTAHHQLFDARIGGRKHRPMVDQQSAVVILQTALDRSRE</sequence>
<organism>
    <name type="scientific">Bifidobacterium adolescentis (strain ATCC 15703 / DSM 20083 / NCTC 11814 / E194a)</name>
    <dbReference type="NCBI Taxonomy" id="367928"/>
    <lineage>
        <taxon>Bacteria</taxon>
        <taxon>Bacillati</taxon>
        <taxon>Actinomycetota</taxon>
        <taxon>Actinomycetes</taxon>
        <taxon>Bifidobacteriales</taxon>
        <taxon>Bifidobacteriaceae</taxon>
        <taxon>Bifidobacterium</taxon>
    </lineage>
</organism>
<comment type="function">
    <text evidence="1">Could be a nuclease involved in processing of the 5'-end of pre-16S rRNA.</text>
</comment>
<comment type="subcellular location">
    <subcellularLocation>
        <location evidence="1">Cytoplasm</location>
    </subcellularLocation>
</comment>
<comment type="similarity">
    <text evidence="1">Belongs to the YqgF nuclease family.</text>
</comment>
<evidence type="ECO:0000255" key="1">
    <source>
        <dbReference type="HAMAP-Rule" id="MF_00651"/>
    </source>
</evidence>
<feature type="chain" id="PRO_1000061487" description="Putative pre-16S rRNA nuclease">
    <location>
        <begin position="1"/>
        <end position="151"/>
    </location>
</feature>
<keyword id="KW-0963">Cytoplasm</keyword>
<keyword id="KW-0378">Hydrolase</keyword>
<keyword id="KW-0540">Nuclease</keyword>
<keyword id="KW-1185">Reference proteome</keyword>
<keyword id="KW-0690">Ribosome biogenesis</keyword>
<proteinExistence type="inferred from homology"/>